<reference key="1">
    <citation type="journal article" date="2008" name="Proc. Natl. Acad. Sci. U.S.A.">
        <title>Nitrogen fixation island and rhizosphere competence traits in the genome of root-associated Pseudomonas stutzeri A1501.</title>
        <authorList>
            <person name="Yan Y."/>
            <person name="Yang J."/>
            <person name="Dou Y."/>
            <person name="Chen M."/>
            <person name="Ping S."/>
            <person name="Peng J."/>
            <person name="Lu W."/>
            <person name="Zhang W."/>
            <person name="Yao Z."/>
            <person name="Li H."/>
            <person name="Liu W."/>
            <person name="He S."/>
            <person name="Geng L."/>
            <person name="Zhang X."/>
            <person name="Yang F."/>
            <person name="Yu H."/>
            <person name="Zhan Y."/>
            <person name="Li D."/>
            <person name="Lin Z."/>
            <person name="Wang Y."/>
            <person name="Elmerich C."/>
            <person name="Lin M."/>
            <person name="Jin Q."/>
        </authorList>
    </citation>
    <scope>NUCLEOTIDE SEQUENCE [LARGE SCALE GENOMIC DNA]</scope>
    <source>
        <strain>A1501</strain>
    </source>
</reference>
<sequence length="196" mass="21157">MHAPIDSNALATLFSEARTHSAWLDKAVPDALLEQLYEHVRLGPTAVNSCPARFVFVRSAEGKQKLAPCLSKGNLDKTLAAPVTVVVAYDEDFPETLPELFPHADARSWYAGQPALITENALRNSSLQAGYLILAARALGLDCGPMSGFDGKALDAAFFAGTSWKSNLLINLGYGDASKLRDRLPRLPFDRACVLA</sequence>
<proteinExistence type="inferred from homology"/>
<gene>
    <name type="ordered locus">PST_3601</name>
</gene>
<keyword id="KW-0285">Flavoprotein</keyword>
<keyword id="KW-0288">FMN</keyword>
<keyword id="KW-0520">NAD</keyword>
<keyword id="KW-0521">NADP</keyword>
<keyword id="KW-0560">Oxidoreductase</keyword>
<keyword id="KW-1185">Reference proteome</keyword>
<accession>A4VQH8</accession>
<comment type="cofactor">
    <cofactor evidence="1">
        <name>FMN</name>
        <dbReference type="ChEBI" id="CHEBI:58210"/>
    </cofactor>
</comment>
<comment type="similarity">
    <text evidence="1">Belongs to the nitroreductase family. HadB/RutE subfamily.</text>
</comment>
<dbReference type="EC" id="1.-.-.-" evidence="1"/>
<dbReference type="EMBL" id="CP000304">
    <property type="protein sequence ID" value="ABP81229.1"/>
    <property type="molecule type" value="Genomic_DNA"/>
</dbReference>
<dbReference type="RefSeq" id="WP_011914623.1">
    <property type="nucleotide sequence ID" value="NC_009434.1"/>
</dbReference>
<dbReference type="SMR" id="A4VQH8"/>
<dbReference type="KEGG" id="psa:PST_3601"/>
<dbReference type="eggNOG" id="COG0778">
    <property type="taxonomic scope" value="Bacteria"/>
</dbReference>
<dbReference type="HOGENOM" id="CLU_084441_0_0_6"/>
<dbReference type="Proteomes" id="UP000000233">
    <property type="component" value="Chromosome"/>
</dbReference>
<dbReference type="GO" id="GO:0016491">
    <property type="term" value="F:oxidoreductase activity"/>
    <property type="evidence" value="ECO:0007669"/>
    <property type="project" value="UniProtKB-UniRule"/>
</dbReference>
<dbReference type="CDD" id="cd02148">
    <property type="entry name" value="RutE-like"/>
    <property type="match status" value="1"/>
</dbReference>
<dbReference type="Gene3D" id="3.40.109.10">
    <property type="entry name" value="NADH Oxidase"/>
    <property type="match status" value="1"/>
</dbReference>
<dbReference type="HAMAP" id="MF_01204">
    <property type="entry name" value="Oxidoreductase_RutE_HadB"/>
    <property type="match status" value="1"/>
</dbReference>
<dbReference type="InterPro" id="IPR029479">
    <property type="entry name" value="Nitroreductase"/>
</dbReference>
<dbReference type="InterPro" id="IPR000415">
    <property type="entry name" value="Nitroreductase-like"/>
</dbReference>
<dbReference type="InterPro" id="IPR050461">
    <property type="entry name" value="Nitroreductase_HadB/RutE"/>
</dbReference>
<dbReference type="InterPro" id="IPR023936">
    <property type="entry name" value="RutE-like"/>
</dbReference>
<dbReference type="NCBIfam" id="NF003768">
    <property type="entry name" value="PRK05365.1"/>
    <property type="match status" value="1"/>
</dbReference>
<dbReference type="PANTHER" id="PTHR43543">
    <property type="entry name" value="MALONIC SEMIALDEHYDE REDUCTASE RUTE-RELATED"/>
    <property type="match status" value="1"/>
</dbReference>
<dbReference type="PANTHER" id="PTHR43543:SF1">
    <property type="entry name" value="MALONIC SEMIALDEHYDE REDUCTASE RUTE-RELATED"/>
    <property type="match status" value="1"/>
</dbReference>
<dbReference type="Pfam" id="PF00881">
    <property type="entry name" value="Nitroreductase"/>
    <property type="match status" value="1"/>
</dbReference>
<dbReference type="SUPFAM" id="SSF55469">
    <property type="entry name" value="FMN-dependent nitroreductase-like"/>
    <property type="match status" value="1"/>
</dbReference>
<evidence type="ECO:0000255" key="1">
    <source>
        <dbReference type="HAMAP-Rule" id="MF_01204"/>
    </source>
</evidence>
<organism>
    <name type="scientific">Stutzerimonas stutzeri (strain A1501)</name>
    <name type="common">Pseudomonas stutzeri</name>
    <dbReference type="NCBI Taxonomy" id="379731"/>
    <lineage>
        <taxon>Bacteria</taxon>
        <taxon>Pseudomonadati</taxon>
        <taxon>Pseudomonadota</taxon>
        <taxon>Gammaproteobacteria</taxon>
        <taxon>Pseudomonadales</taxon>
        <taxon>Pseudomonadaceae</taxon>
        <taxon>Stutzerimonas</taxon>
    </lineage>
</organism>
<name>Y3601_STUS1</name>
<feature type="chain" id="PRO_1000066143" description="Putative NADH dehydrogenase/NAD(P)H nitroreductase PST_3601">
    <location>
        <begin position="1"/>
        <end position="196"/>
    </location>
</feature>
<protein>
    <recommendedName>
        <fullName evidence="1">Putative NADH dehydrogenase/NAD(P)H nitroreductase PST_3601</fullName>
        <ecNumber evidence="1">1.-.-.-</ecNumber>
    </recommendedName>
</protein>